<gene>
    <name evidence="1" type="primary">coaD</name>
    <name type="ordered locus">EcHS_A3843</name>
</gene>
<comment type="function">
    <text evidence="1">Reversibly transfers an adenylyl group from ATP to 4'-phosphopantetheine, yielding dephospho-CoA (dPCoA) and pyrophosphate.</text>
</comment>
<comment type="catalytic activity">
    <reaction evidence="1">
        <text>(R)-4'-phosphopantetheine + ATP + H(+) = 3'-dephospho-CoA + diphosphate</text>
        <dbReference type="Rhea" id="RHEA:19801"/>
        <dbReference type="ChEBI" id="CHEBI:15378"/>
        <dbReference type="ChEBI" id="CHEBI:30616"/>
        <dbReference type="ChEBI" id="CHEBI:33019"/>
        <dbReference type="ChEBI" id="CHEBI:57328"/>
        <dbReference type="ChEBI" id="CHEBI:61723"/>
        <dbReference type="EC" id="2.7.7.3"/>
    </reaction>
</comment>
<comment type="cofactor">
    <cofactor evidence="1">
        <name>Mg(2+)</name>
        <dbReference type="ChEBI" id="CHEBI:18420"/>
    </cofactor>
</comment>
<comment type="pathway">
    <text evidence="1">Cofactor biosynthesis; coenzyme A biosynthesis; CoA from (R)-pantothenate: step 4/5.</text>
</comment>
<comment type="subunit">
    <text evidence="1">Homohexamer.</text>
</comment>
<comment type="subcellular location">
    <subcellularLocation>
        <location evidence="1">Cytoplasm</location>
    </subcellularLocation>
</comment>
<comment type="similarity">
    <text evidence="1">Belongs to the bacterial CoaD family.</text>
</comment>
<feature type="chain" id="PRO_1000058162" description="Phosphopantetheine adenylyltransferase">
    <location>
        <begin position="1"/>
        <end position="159"/>
    </location>
</feature>
<feature type="binding site" evidence="1">
    <location>
        <begin position="10"/>
        <end position="11"/>
    </location>
    <ligand>
        <name>ATP</name>
        <dbReference type="ChEBI" id="CHEBI:30616"/>
    </ligand>
</feature>
<feature type="binding site" evidence="1">
    <location>
        <position position="10"/>
    </location>
    <ligand>
        <name>substrate</name>
    </ligand>
</feature>
<feature type="binding site" evidence="1">
    <location>
        <position position="18"/>
    </location>
    <ligand>
        <name>ATP</name>
        <dbReference type="ChEBI" id="CHEBI:30616"/>
    </ligand>
</feature>
<feature type="binding site" evidence="1">
    <location>
        <position position="42"/>
    </location>
    <ligand>
        <name>substrate</name>
    </ligand>
</feature>
<feature type="binding site" evidence="1">
    <location>
        <position position="74"/>
    </location>
    <ligand>
        <name>substrate</name>
    </ligand>
</feature>
<feature type="binding site" evidence="1">
    <location>
        <position position="88"/>
    </location>
    <ligand>
        <name>substrate</name>
    </ligand>
</feature>
<feature type="binding site" evidence="1">
    <location>
        <begin position="89"/>
        <end position="91"/>
    </location>
    <ligand>
        <name>ATP</name>
        <dbReference type="ChEBI" id="CHEBI:30616"/>
    </ligand>
</feature>
<feature type="binding site" evidence="1">
    <location>
        <position position="99"/>
    </location>
    <ligand>
        <name>ATP</name>
        <dbReference type="ChEBI" id="CHEBI:30616"/>
    </ligand>
</feature>
<feature type="binding site" evidence="1">
    <location>
        <begin position="124"/>
        <end position="130"/>
    </location>
    <ligand>
        <name>ATP</name>
        <dbReference type="ChEBI" id="CHEBI:30616"/>
    </ligand>
</feature>
<feature type="site" description="Transition state stabilizer" evidence="1">
    <location>
        <position position="18"/>
    </location>
</feature>
<name>COAD_ECOHS</name>
<proteinExistence type="inferred from homology"/>
<evidence type="ECO:0000255" key="1">
    <source>
        <dbReference type="HAMAP-Rule" id="MF_00151"/>
    </source>
</evidence>
<accession>A8A696</accession>
<organism>
    <name type="scientific">Escherichia coli O9:H4 (strain HS)</name>
    <dbReference type="NCBI Taxonomy" id="331112"/>
    <lineage>
        <taxon>Bacteria</taxon>
        <taxon>Pseudomonadati</taxon>
        <taxon>Pseudomonadota</taxon>
        <taxon>Gammaproteobacteria</taxon>
        <taxon>Enterobacterales</taxon>
        <taxon>Enterobacteriaceae</taxon>
        <taxon>Escherichia</taxon>
    </lineage>
</organism>
<keyword id="KW-0067">ATP-binding</keyword>
<keyword id="KW-0173">Coenzyme A biosynthesis</keyword>
<keyword id="KW-0963">Cytoplasm</keyword>
<keyword id="KW-0460">Magnesium</keyword>
<keyword id="KW-0547">Nucleotide-binding</keyword>
<keyword id="KW-0548">Nucleotidyltransferase</keyword>
<keyword id="KW-0808">Transferase</keyword>
<reference key="1">
    <citation type="journal article" date="2008" name="J. Bacteriol.">
        <title>The pangenome structure of Escherichia coli: comparative genomic analysis of E. coli commensal and pathogenic isolates.</title>
        <authorList>
            <person name="Rasko D.A."/>
            <person name="Rosovitz M.J."/>
            <person name="Myers G.S.A."/>
            <person name="Mongodin E.F."/>
            <person name="Fricke W.F."/>
            <person name="Gajer P."/>
            <person name="Crabtree J."/>
            <person name="Sebaihia M."/>
            <person name="Thomson N.R."/>
            <person name="Chaudhuri R."/>
            <person name="Henderson I.R."/>
            <person name="Sperandio V."/>
            <person name="Ravel J."/>
        </authorList>
    </citation>
    <scope>NUCLEOTIDE SEQUENCE [LARGE SCALE GENOMIC DNA]</scope>
    <source>
        <strain>HS</strain>
    </source>
</reference>
<protein>
    <recommendedName>
        <fullName evidence="1">Phosphopantetheine adenylyltransferase</fullName>
        <ecNumber evidence="1">2.7.7.3</ecNumber>
    </recommendedName>
    <alternativeName>
        <fullName evidence="1">Dephospho-CoA pyrophosphorylase</fullName>
    </alternativeName>
    <alternativeName>
        <fullName evidence="1">Pantetheine-phosphate adenylyltransferase</fullName>
        <shortName evidence="1">PPAT</shortName>
    </alternativeName>
</protein>
<dbReference type="EC" id="2.7.7.3" evidence="1"/>
<dbReference type="EMBL" id="CP000802">
    <property type="protein sequence ID" value="ABV08050.1"/>
    <property type="molecule type" value="Genomic_DNA"/>
</dbReference>
<dbReference type="RefSeq" id="WP_001171866.1">
    <property type="nucleotide sequence ID" value="NC_009800.1"/>
</dbReference>
<dbReference type="SMR" id="A8A696"/>
<dbReference type="GeneID" id="75202203"/>
<dbReference type="KEGG" id="ecx:EcHS_A3843"/>
<dbReference type="HOGENOM" id="CLU_100149_0_1_6"/>
<dbReference type="UniPathway" id="UPA00241">
    <property type="reaction ID" value="UER00355"/>
</dbReference>
<dbReference type="GO" id="GO:0005737">
    <property type="term" value="C:cytoplasm"/>
    <property type="evidence" value="ECO:0007669"/>
    <property type="project" value="UniProtKB-SubCell"/>
</dbReference>
<dbReference type="GO" id="GO:0005524">
    <property type="term" value="F:ATP binding"/>
    <property type="evidence" value="ECO:0007669"/>
    <property type="project" value="UniProtKB-KW"/>
</dbReference>
<dbReference type="GO" id="GO:0004595">
    <property type="term" value="F:pantetheine-phosphate adenylyltransferase activity"/>
    <property type="evidence" value="ECO:0007669"/>
    <property type="project" value="UniProtKB-UniRule"/>
</dbReference>
<dbReference type="GO" id="GO:0015937">
    <property type="term" value="P:coenzyme A biosynthetic process"/>
    <property type="evidence" value="ECO:0007669"/>
    <property type="project" value="UniProtKB-UniRule"/>
</dbReference>
<dbReference type="CDD" id="cd02163">
    <property type="entry name" value="PPAT"/>
    <property type="match status" value="1"/>
</dbReference>
<dbReference type="FunFam" id="3.40.50.620:FF:000012">
    <property type="entry name" value="Phosphopantetheine adenylyltransferase"/>
    <property type="match status" value="1"/>
</dbReference>
<dbReference type="Gene3D" id="3.40.50.620">
    <property type="entry name" value="HUPs"/>
    <property type="match status" value="1"/>
</dbReference>
<dbReference type="HAMAP" id="MF_00151">
    <property type="entry name" value="PPAT_bact"/>
    <property type="match status" value="1"/>
</dbReference>
<dbReference type="InterPro" id="IPR004821">
    <property type="entry name" value="Cyt_trans-like"/>
</dbReference>
<dbReference type="InterPro" id="IPR001980">
    <property type="entry name" value="PPAT"/>
</dbReference>
<dbReference type="InterPro" id="IPR014729">
    <property type="entry name" value="Rossmann-like_a/b/a_fold"/>
</dbReference>
<dbReference type="NCBIfam" id="TIGR01510">
    <property type="entry name" value="coaD_prev_kdtB"/>
    <property type="match status" value="1"/>
</dbReference>
<dbReference type="NCBIfam" id="TIGR00125">
    <property type="entry name" value="cyt_tran_rel"/>
    <property type="match status" value="1"/>
</dbReference>
<dbReference type="PANTHER" id="PTHR21342">
    <property type="entry name" value="PHOSPHOPANTETHEINE ADENYLYLTRANSFERASE"/>
    <property type="match status" value="1"/>
</dbReference>
<dbReference type="PANTHER" id="PTHR21342:SF1">
    <property type="entry name" value="PHOSPHOPANTETHEINE ADENYLYLTRANSFERASE"/>
    <property type="match status" value="1"/>
</dbReference>
<dbReference type="Pfam" id="PF01467">
    <property type="entry name" value="CTP_transf_like"/>
    <property type="match status" value="1"/>
</dbReference>
<dbReference type="PRINTS" id="PR01020">
    <property type="entry name" value="LPSBIOSNTHSS"/>
</dbReference>
<dbReference type="SUPFAM" id="SSF52374">
    <property type="entry name" value="Nucleotidylyl transferase"/>
    <property type="match status" value="1"/>
</dbReference>
<sequence>MQKRAIYPGTFDPITNGHIDIVTRATQMFDHVILAIAASPSKKPMFTLEERVALAQQATAHLGNVEVVGFSDLMANFARNQHATVLIRGLRAVADFEYEMQLAHMNRHLMPELESVFLMPSKEWSFISSSLVKEVARHQGDVTHFLPENVHQALMAKLA</sequence>